<accession>P95928</accession>
<organism>
    <name type="scientific">Saccharolobus solfataricus (strain ATCC 35092 / DSM 1617 / JCM 11322 / P2)</name>
    <name type="common">Sulfolobus solfataricus</name>
    <dbReference type="NCBI Taxonomy" id="273057"/>
    <lineage>
        <taxon>Archaea</taxon>
        <taxon>Thermoproteota</taxon>
        <taxon>Thermoprotei</taxon>
        <taxon>Sulfolobales</taxon>
        <taxon>Sulfolobaceae</taxon>
        <taxon>Saccharolobus</taxon>
    </lineage>
</organism>
<proteinExistence type="evidence at protein level"/>
<dbReference type="EC" id="3.4.11.1"/>
<dbReference type="EMBL" id="AF043465">
    <property type="protein sequence ID" value="AAC63218.1"/>
    <property type="molecule type" value="Genomic_DNA"/>
</dbReference>
<dbReference type="EMBL" id="Y08256">
    <property type="protein sequence ID" value="CAA69432.1"/>
    <property type="molecule type" value="Genomic_DNA"/>
</dbReference>
<dbReference type="EMBL" id="AE006641">
    <property type="protein sequence ID" value="AAK42330.1"/>
    <property type="molecule type" value="Genomic_DNA"/>
</dbReference>
<dbReference type="PIR" id="S73098">
    <property type="entry name" value="S73098"/>
</dbReference>
<dbReference type="RefSeq" id="WP_009992163.1">
    <property type="nucleotide sequence ID" value="NC_002754.1"/>
</dbReference>
<dbReference type="SMR" id="P95928"/>
<dbReference type="FunCoup" id="P95928">
    <property type="interactions" value="170"/>
</dbReference>
<dbReference type="STRING" id="273057.SSO2154"/>
<dbReference type="MEROPS" id="M01.021"/>
<dbReference type="PaxDb" id="273057-SSO2154"/>
<dbReference type="EnsemblBacteria" id="AAK42330">
    <property type="protein sequence ID" value="AAK42330"/>
    <property type="gene ID" value="SSO2154"/>
</dbReference>
<dbReference type="KEGG" id="sso:SSO2154"/>
<dbReference type="PATRIC" id="fig|273057.12.peg.2247"/>
<dbReference type="eggNOG" id="arCOG02969">
    <property type="taxonomic scope" value="Archaea"/>
</dbReference>
<dbReference type="HOGENOM" id="CLU_003705_0_3_2"/>
<dbReference type="InParanoid" id="P95928"/>
<dbReference type="PhylomeDB" id="P95928"/>
<dbReference type="BRENDA" id="3.4.11.B3">
    <property type="organism ID" value="6163"/>
</dbReference>
<dbReference type="Proteomes" id="UP000001974">
    <property type="component" value="Chromosome"/>
</dbReference>
<dbReference type="GO" id="GO:0005737">
    <property type="term" value="C:cytoplasm"/>
    <property type="evidence" value="ECO:0000318"/>
    <property type="project" value="GO_Central"/>
</dbReference>
<dbReference type="GO" id="GO:0005615">
    <property type="term" value="C:extracellular space"/>
    <property type="evidence" value="ECO:0000318"/>
    <property type="project" value="GO_Central"/>
</dbReference>
<dbReference type="GO" id="GO:0016020">
    <property type="term" value="C:membrane"/>
    <property type="evidence" value="ECO:0000318"/>
    <property type="project" value="GO_Central"/>
</dbReference>
<dbReference type="GO" id="GO:0070006">
    <property type="term" value="F:metalloaminopeptidase activity"/>
    <property type="evidence" value="ECO:0000318"/>
    <property type="project" value="GO_Central"/>
</dbReference>
<dbReference type="GO" id="GO:0042277">
    <property type="term" value="F:peptide binding"/>
    <property type="evidence" value="ECO:0000318"/>
    <property type="project" value="GO_Central"/>
</dbReference>
<dbReference type="GO" id="GO:0008270">
    <property type="term" value="F:zinc ion binding"/>
    <property type="evidence" value="ECO:0000318"/>
    <property type="project" value="GO_Central"/>
</dbReference>
<dbReference type="GO" id="GO:0043171">
    <property type="term" value="P:peptide catabolic process"/>
    <property type="evidence" value="ECO:0000318"/>
    <property type="project" value="GO_Central"/>
</dbReference>
<dbReference type="GO" id="GO:0006508">
    <property type="term" value="P:proteolysis"/>
    <property type="evidence" value="ECO:0000318"/>
    <property type="project" value="GO_Central"/>
</dbReference>
<dbReference type="CDD" id="cd09601">
    <property type="entry name" value="M1_APN-Q_like"/>
    <property type="match status" value="1"/>
</dbReference>
<dbReference type="FunFam" id="2.60.40.1910:FF:000012">
    <property type="entry name" value="Aminopeptidase"/>
    <property type="match status" value="1"/>
</dbReference>
<dbReference type="FunFam" id="2.60.40.1730:FF:000036">
    <property type="entry name" value="Leucyl aminopeptidase"/>
    <property type="match status" value="1"/>
</dbReference>
<dbReference type="FunFam" id="1.10.390.10:FF:000006">
    <property type="entry name" value="Puromycin-sensitive aminopeptidase"/>
    <property type="match status" value="1"/>
</dbReference>
<dbReference type="Gene3D" id="1.25.50.20">
    <property type="match status" value="1"/>
</dbReference>
<dbReference type="Gene3D" id="2.60.40.1910">
    <property type="match status" value="1"/>
</dbReference>
<dbReference type="Gene3D" id="1.10.390.10">
    <property type="entry name" value="Neutral Protease Domain 2"/>
    <property type="match status" value="1"/>
</dbReference>
<dbReference type="Gene3D" id="2.60.40.1730">
    <property type="entry name" value="tricorn interacting facor f3 domain"/>
    <property type="match status" value="1"/>
</dbReference>
<dbReference type="InterPro" id="IPR045357">
    <property type="entry name" value="Aminopeptidase_N-like_N"/>
</dbReference>
<dbReference type="InterPro" id="IPR042097">
    <property type="entry name" value="Aminopeptidase_N-like_N_sf"/>
</dbReference>
<dbReference type="InterPro" id="IPR024571">
    <property type="entry name" value="ERAP1-like_C_dom"/>
</dbReference>
<dbReference type="InterPro" id="IPR034016">
    <property type="entry name" value="M1_APN-typ"/>
</dbReference>
<dbReference type="InterPro" id="IPR001930">
    <property type="entry name" value="Peptidase_M1"/>
</dbReference>
<dbReference type="InterPro" id="IPR050344">
    <property type="entry name" value="Peptidase_M1_aminopeptidases"/>
</dbReference>
<dbReference type="InterPro" id="IPR014782">
    <property type="entry name" value="Peptidase_M1_dom"/>
</dbReference>
<dbReference type="InterPro" id="IPR027268">
    <property type="entry name" value="Peptidase_M4/M1_CTD_sf"/>
</dbReference>
<dbReference type="PANTHER" id="PTHR11533">
    <property type="entry name" value="PROTEASE M1 ZINC METALLOPROTEASE"/>
    <property type="match status" value="1"/>
</dbReference>
<dbReference type="PANTHER" id="PTHR11533:SF174">
    <property type="entry name" value="PUROMYCIN-SENSITIVE AMINOPEPTIDASE-RELATED"/>
    <property type="match status" value="1"/>
</dbReference>
<dbReference type="Pfam" id="PF11838">
    <property type="entry name" value="ERAP1_C"/>
    <property type="match status" value="1"/>
</dbReference>
<dbReference type="Pfam" id="PF01433">
    <property type="entry name" value="Peptidase_M1"/>
    <property type="match status" value="1"/>
</dbReference>
<dbReference type="Pfam" id="PF17900">
    <property type="entry name" value="Peptidase_M1_N"/>
    <property type="match status" value="1"/>
</dbReference>
<dbReference type="PRINTS" id="PR00756">
    <property type="entry name" value="ALADIPTASE"/>
</dbReference>
<dbReference type="SUPFAM" id="SSF63737">
    <property type="entry name" value="Leukotriene A4 hydrolase N-terminal domain"/>
    <property type="match status" value="1"/>
</dbReference>
<dbReference type="SUPFAM" id="SSF55486">
    <property type="entry name" value="Metalloproteases ('zincins'), catalytic domain"/>
    <property type="match status" value="1"/>
</dbReference>
<dbReference type="PROSITE" id="PS00142">
    <property type="entry name" value="ZINC_PROTEASE"/>
    <property type="match status" value="1"/>
</dbReference>
<sequence>MIKVNRYEIFLDFSFQTGDYKGYEKIEMESDEETVVLDAVGLKIVKAKVNGKEIEFSQDESRVNVKSGSFSGILEVEFEGKVTERKLVGIYKASYKDGYVISTQFEATHARDFIPCFDHPAMKARFKLTVRVDKGLKVISNMPVVREKEENGKVVYEFDETPKMSTYLLYLGIGNFEEIRDEGKIPTIIVATIPGKVQKGRFSMQISRNSIEFYEKYFEIPYQLPKVHLIAIPEFAYGAMENWGAITFRETALLADDSSSVYQKFRVAEVVAHELAHQWFGNLVTLKWWDDLWLNESFATFMSHKAISQLFPSWNFWDYFVLNQTSRALEKDSVSTTHPIEAHVRDPNEVEQMFDDISYGKGASILRMIEAYVGEENFRRGVVNYLKKFSYSNAQGSDLWNSISEVYGSDISPIMADWITKPGYPMVRVSVSGKRVSLEQERFSLIGNVENLLYKIPLTMEVNGKVVTHLLDKERDTMVFEEDVKSLKVNVNRTGFYRVFYYNNSDLVFNSNLSELDKWGIINDYWAFLLAGKIGFKEYERVISKFFNDKDFLPVNELSNELFTLHAINPDKYQGIAKEFHRIQLKNWRNSKDELGRLTYSNILYRLAAIDDEFSLGLSELFRFYGSLDSDTRQGVAVAYAITYEDNSVDELLERFRKETFDEEKLRYLTAMLFFRKPYLVGNTLSLILSGEIKKQDIPLTLSTAAYNPYAKSAVLNWIKMHINFMREAYKGTGILGRRLAEVIPLIGIGAERETEQFFSNLNMPEAERGIGTGLELLKAYSRLK</sequence>
<evidence type="ECO:0000250" key="1"/>
<evidence type="ECO:0000255" key="2">
    <source>
        <dbReference type="PROSITE-ProRule" id="PRU10095"/>
    </source>
</evidence>
<evidence type="ECO:0000305" key="3"/>
<name>APE2_SACS2</name>
<keyword id="KW-0031">Aminopeptidase</keyword>
<keyword id="KW-0963">Cytoplasm</keyword>
<keyword id="KW-0903">Direct protein sequencing</keyword>
<keyword id="KW-0378">Hydrolase</keyword>
<keyword id="KW-0479">Metal-binding</keyword>
<keyword id="KW-0482">Metalloprotease</keyword>
<keyword id="KW-0597">Phosphoprotein</keyword>
<keyword id="KW-0645">Protease</keyword>
<keyword id="KW-1185">Reference proteome</keyword>
<keyword id="KW-0862">Zinc</keyword>
<reference key="1">
    <citation type="journal article" date="1998" name="Mol. Microbiol.">
        <title>A novel aminopeptidase associated with the 60 kDa chaperonin in the thermophilic archaeon Sulfolobus solfataricus.</title>
        <authorList>
            <person name="Condo I."/>
            <person name="Ruggero D."/>
            <person name="Reinhardt R."/>
            <person name="Londei P."/>
        </authorList>
    </citation>
    <scope>NUCLEOTIDE SEQUENCE [GENOMIC DNA]</scope>
    <scope>PROTEIN SEQUENCE OF 1-7</scope>
    <source>
        <strain>DSM 5833 / MT-4</strain>
    </source>
</reference>
<reference key="2">
    <citation type="journal article" date="1996" name="Mol. Microbiol.">
        <title>Organizational characteristics and information content of an archaeal genome: 156 kb of sequence from Sulfolobus solfataricus P2.</title>
        <authorList>
            <person name="Sensen C.W."/>
            <person name="Klenk H.-P."/>
            <person name="Singh R.K."/>
            <person name="Allard G."/>
            <person name="Chan C.C.-Y."/>
            <person name="Liu Q.Y."/>
            <person name="Penny S.L."/>
            <person name="Young F."/>
            <person name="Schenk M.E."/>
            <person name="Gaasterland T."/>
            <person name="Doolittle W.F."/>
            <person name="Ragan M.A."/>
            <person name="Charlebois R.L."/>
        </authorList>
    </citation>
    <scope>NUCLEOTIDE SEQUENCE [GENOMIC DNA]</scope>
    <source>
        <strain>ATCC 35092 / DSM 1617 / JCM 11322 / P2</strain>
    </source>
</reference>
<reference key="3">
    <citation type="journal article" date="2001" name="Proc. Natl. Acad. Sci. U.S.A.">
        <title>The complete genome of the crenarchaeon Sulfolobus solfataricus P2.</title>
        <authorList>
            <person name="She Q."/>
            <person name="Singh R.K."/>
            <person name="Confalonieri F."/>
            <person name="Zivanovic Y."/>
            <person name="Allard G."/>
            <person name="Awayez M.J."/>
            <person name="Chan-Weiher C.C.-Y."/>
            <person name="Clausen I.G."/>
            <person name="Curtis B.A."/>
            <person name="De Moors A."/>
            <person name="Erauso G."/>
            <person name="Fletcher C."/>
            <person name="Gordon P.M.K."/>
            <person name="Heikamp-de Jong I."/>
            <person name="Jeffries A.C."/>
            <person name="Kozera C.J."/>
            <person name="Medina N."/>
            <person name="Peng X."/>
            <person name="Thi-Ngoc H.P."/>
            <person name="Redder P."/>
            <person name="Schenk M.E."/>
            <person name="Theriault C."/>
            <person name="Tolstrup N."/>
            <person name="Charlebois R.L."/>
            <person name="Doolittle W.F."/>
            <person name="Duguet M."/>
            <person name="Gaasterland T."/>
            <person name="Garrett R.A."/>
            <person name="Ragan M.A."/>
            <person name="Sensen C.W."/>
            <person name="Van der Oost J."/>
        </authorList>
    </citation>
    <scope>NUCLEOTIDE SEQUENCE [LARGE SCALE GENOMIC DNA]</scope>
    <source>
        <strain>ATCC 35092 / DSM 1617 / JCM 11322 / P2</strain>
    </source>
</reference>
<feature type="chain" id="PRO_0000095107" description="Leucyl aminopeptidase">
    <location>
        <begin position="1"/>
        <end position="785"/>
    </location>
</feature>
<feature type="active site" description="Proton acceptor" evidence="2">
    <location>
        <position position="274"/>
    </location>
</feature>
<feature type="binding site" evidence="1">
    <location>
        <position position="106"/>
    </location>
    <ligand>
        <name>substrate</name>
    </ligand>
</feature>
<feature type="binding site" evidence="1">
    <location>
        <begin position="238"/>
        <end position="242"/>
    </location>
    <ligand>
        <name>substrate</name>
    </ligand>
</feature>
<feature type="binding site" evidence="2">
    <location>
        <position position="273"/>
    </location>
    <ligand>
        <name>Zn(2+)</name>
        <dbReference type="ChEBI" id="CHEBI:29105"/>
        <note>catalytic</note>
    </ligand>
</feature>
<feature type="binding site" evidence="2">
    <location>
        <position position="277"/>
    </location>
    <ligand>
        <name>Zn(2+)</name>
        <dbReference type="ChEBI" id="CHEBI:29105"/>
        <note>catalytic</note>
    </ligand>
</feature>
<feature type="binding site" evidence="2">
    <location>
        <position position="296"/>
    </location>
    <ligand>
        <name>Zn(2+)</name>
        <dbReference type="ChEBI" id="CHEBI:29105"/>
        <note>catalytic</note>
    </ligand>
</feature>
<feature type="site" description="Transition state stabilizer" evidence="1">
    <location>
        <position position="359"/>
    </location>
</feature>
<gene>
    <name type="primary">ape2</name>
    <name type="synonym">lap</name>
    <name type="ordered locus">SSO2154</name>
    <name type="ORF">C01_030</name>
</gene>
<comment type="function">
    <text>Preferentially acts as a leucyl-aminopeptidase, although it also has activity against other substrates.</text>
</comment>
<comment type="catalytic activity">
    <reaction>
        <text>Release of an N-terminal amino acid, Xaa-|-Yaa-, in which Xaa is preferably Leu, but may be other amino acids including Pro although not Arg or Lys, and Yaa may be Pro. Amino acid amides and methyl esters are also readily hydrolyzed, but rates on arylamides are exceedingly low.</text>
        <dbReference type="EC" id="3.4.11.1"/>
    </reaction>
</comment>
<comment type="cofactor">
    <cofactor evidence="1">
        <name>Zn(2+)</name>
        <dbReference type="ChEBI" id="CHEBI:29105"/>
    </cofactor>
    <text evidence="1">Binds 1 zinc ion per subunit.</text>
</comment>
<comment type="biophysicochemical properties">
    <phDependence>
        <text>Optimum pH is 6.</text>
    </phDependence>
    <temperatureDependence>
        <text>Optimum temperature is 80 degrees Celsius.</text>
    </temperatureDependence>
</comment>
<comment type="subunit">
    <text>Co-immunoprecipitates with the 60 kDa chaperonin.</text>
</comment>
<comment type="subcellular location">
    <subcellularLocation>
        <location evidence="3">Cytoplasm</location>
    </subcellularLocation>
</comment>
<comment type="PTM">
    <text>Can be phosphorylated by cell extracts.</text>
</comment>
<comment type="similarity">
    <text evidence="3">Belongs to the peptidase M1 family.</text>
</comment>
<protein>
    <recommendedName>
        <fullName>Leucyl aminopeptidase</fullName>
        <ecNumber>3.4.11.1</ecNumber>
    </recommendedName>
</protein>